<gene>
    <name type="ordered locus">PP_0416</name>
</gene>
<accession>Q88QS2</accession>
<sequence length="272" mass="29604">MSGFEQLFPGTLPRLVMFDLDGTLIDSVPDLAAAVDRMLLELGRPPAGLEAVRHWVGNGAQVLVRRALAGGIDHADVDDALAEQALALFMDAYAESHELTVVYPGVRDTLRWLRKQGVEMALITNKPERFVGPLLDQMKIGNFFRWIIGGDTLPQKKPDPAALLFVMQMAGVTPQQSLFVGDSRSDVQAAKAAGVQCVGLTYGYNHGRPIDAESPSLVIDDLRALLPGCADPATGITLADLQASQDRESTVAVTGKFWMKVIKALARWRWRA</sequence>
<keyword id="KW-0119">Carbohydrate metabolism</keyword>
<keyword id="KW-0378">Hydrolase</keyword>
<keyword id="KW-0460">Magnesium</keyword>
<keyword id="KW-0479">Metal-binding</keyword>
<keyword id="KW-1185">Reference proteome</keyword>
<organism>
    <name type="scientific">Pseudomonas putida (strain ATCC 47054 / DSM 6125 / CFBP 8728 / NCIMB 11950 / KT2440)</name>
    <dbReference type="NCBI Taxonomy" id="160488"/>
    <lineage>
        <taxon>Bacteria</taxon>
        <taxon>Pseudomonadati</taxon>
        <taxon>Pseudomonadota</taxon>
        <taxon>Gammaproteobacteria</taxon>
        <taxon>Pseudomonadales</taxon>
        <taxon>Pseudomonadaceae</taxon>
        <taxon>Pseudomonas</taxon>
    </lineage>
</organism>
<protein>
    <recommendedName>
        <fullName evidence="1">Phosphoglycolate phosphatase</fullName>
        <shortName evidence="1">PGP</shortName>
        <shortName evidence="1">PGPase</shortName>
        <ecNumber evidence="1">3.1.3.18</ecNumber>
    </recommendedName>
</protein>
<dbReference type="EC" id="3.1.3.18" evidence="1"/>
<dbReference type="EMBL" id="AE015451">
    <property type="protein sequence ID" value="AAN66046.1"/>
    <property type="molecule type" value="Genomic_DNA"/>
</dbReference>
<dbReference type="RefSeq" id="NP_742582.1">
    <property type="nucleotide sequence ID" value="NC_002947.4"/>
</dbReference>
<dbReference type="RefSeq" id="WP_010951753.1">
    <property type="nucleotide sequence ID" value="NZ_CP169744.1"/>
</dbReference>
<dbReference type="SMR" id="Q88QS2"/>
<dbReference type="STRING" id="160488.PP_0416"/>
<dbReference type="PaxDb" id="160488-PP_0416"/>
<dbReference type="KEGG" id="ppu:PP_0416"/>
<dbReference type="PATRIC" id="fig|160488.4.peg.448"/>
<dbReference type="eggNOG" id="COG0546">
    <property type="taxonomic scope" value="Bacteria"/>
</dbReference>
<dbReference type="HOGENOM" id="CLU_045011_19_1_6"/>
<dbReference type="OrthoDB" id="9776368at2"/>
<dbReference type="PhylomeDB" id="Q88QS2"/>
<dbReference type="BioCyc" id="PPUT160488:G1G01-453-MONOMER"/>
<dbReference type="UniPathway" id="UPA00865">
    <property type="reaction ID" value="UER00834"/>
</dbReference>
<dbReference type="Proteomes" id="UP000000556">
    <property type="component" value="Chromosome"/>
</dbReference>
<dbReference type="GO" id="GO:0005829">
    <property type="term" value="C:cytosol"/>
    <property type="evidence" value="ECO:0007669"/>
    <property type="project" value="TreeGrafter"/>
</dbReference>
<dbReference type="GO" id="GO:0046872">
    <property type="term" value="F:metal ion binding"/>
    <property type="evidence" value="ECO:0007669"/>
    <property type="project" value="UniProtKB-KW"/>
</dbReference>
<dbReference type="GO" id="GO:0008967">
    <property type="term" value="F:phosphoglycolate phosphatase activity"/>
    <property type="evidence" value="ECO:0007669"/>
    <property type="project" value="UniProtKB-UniRule"/>
</dbReference>
<dbReference type="GO" id="GO:0005975">
    <property type="term" value="P:carbohydrate metabolic process"/>
    <property type="evidence" value="ECO:0007669"/>
    <property type="project" value="InterPro"/>
</dbReference>
<dbReference type="GO" id="GO:0006281">
    <property type="term" value="P:DNA repair"/>
    <property type="evidence" value="ECO:0007669"/>
    <property type="project" value="TreeGrafter"/>
</dbReference>
<dbReference type="GO" id="GO:0046295">
    <property type="term" value="P:glycolate biosynthetic process"/>
    <property type="evidence" value="ECO:0007669"/>
    <property type="project" value="UniProtKB-UniRule"/>
</dbReference>
<dbReference type="CDD" id="cd16417">
    <property type="entry name" value="HAD_PGPase"/>
    <property type="match status" value="1"/>
</dbReference>
<dbReference type="FunFam" id="3.40.50.1000:FF:000022">
    <property type="entry name" value="Phosphoglycolate phosphatase"/>
    <property type="match status" value="1"/>
</dbReference>
<dbReference type="Gene3D" id="3.40.50.1000">
    <property type="entry name" value="HAD superfamily/HAD-like"/>
    <property type="match status" value="1"/>
</dbReference>
<dbReference type="Gene3D" id="1.10.150.240">
    <property type="entry name" value="Putative phosphatase, domain 2"/>
    <property type="match status" value="1"/>
</dbReference>
<dbReference type="HAMAP" id="MF_00495">
    <property type="entry name" value="GPH_hydrolase_bact"/>
    <property type="match status" value="1"/>
</dbReference>
<dbReference type="InterPro" id="IPR050155">
    <property type="entry name" value="HAD-like_hydrolase_sf"/>
</dbReference>
<dbReference type="InterPro" id="IPR036412">
    <property type="entry name" value="HAD-like_sf"/>
</dbReference>
<dbReference type="InterPro" id="IPR006439">
    <property type="entry name" value="HAD-SF_hydro_IA"/>
</dbReference>
<dbReference type="InterPro" id="IPR006549">
    <property type="entry name" value="HAD-SF_hydro_IIIA"/>
</dbReference>
<dbReference type="InterPro" id="IPR041492">
    <property type="entry name" value="HAD_2"/>
</dbReference>
<dbReference type="InterPro" id="IPR023214">
    <property type="entry name" value="HAD_sf"/>
</dbReference>
<dbReference type="InterPro" id="IPR023198">
    <property type="entry name" value="PGP-like_dom2"/>
</dbReference>
<dbReference type="InterPro" id="IPR037512">
    <property type="entry name" value="PGPase_prok"/>
</dbReference>
<dbReference type="NCBIfam" id="TIGR01549">
    <property type="entry name" value="HAD-SF-IA-v1"/>
    <property type="match status" value="1"/>
</dbReference>
<dbReference type="NCBIfam" id="TIGR01509">
    <property type="entry name" value="HAD-SF-IA-v3"/>
    <property type="match status" value="1"/>
</dbReference>
<dbReference type="NCBIfam" id="TIGR01662">
    <property type="entry name" value="HAD-SF-IIIA"/>
    <property type="match status" value="1"/>
</dbReference>
<dbReference type="NCBIfam" id="TIGR01449">
    <property type="entry name" value="PGP_bact"/>
    <property type="match status" value="1"/>
</dbReference>
<dbReference type="NCBIfam" id="NF009695">
    <property type="entry name" value="PRK13222.1-2"/>
    <property type="match status" value="1"/>
</dbReference>
<dbReference type="NCBIfam" id="NF009698">
    <property type="entry name" value="PRK13223.1"/>
    <property type="match status" value="1"/>
</dbReference>
<dbReference type="PANTHER" id="PTHR43434">
    <property type="entry name" value="PHOSPHOGLYCOLATE PHOSPHATASE"/>
    <property type="match status" value="1"/>
</dbReference>
<dbReference type="PANTHER" id="PTHR43434:SF1">
    <property type="entry name" value="PHOSPHOGLYCOLATE PHOSPHATASE"/>
    <property type="match status" value="1"/>
</dbReference>
<dbReference type="Pfam" id="PF13419">
    <property type="entry name" value="HAD_2"/>
    <property type="match status" value="1"/>
</dbReference>
<dbReference type="PRINTS" id="PR00413">
    <property type="entry name" value="HADHALOGNASE"/>
</dbReference>
<dbReference type="SFLD" id="SFLDG01135">
    <property type="entry name" value="C1.5.6:_HAD__Beta-PGM__Phospha"/>
    <property type="match status" value="1"/>
</dbReference>
<dbReference type="SFLD" id="SFLDS00003">
    <property type="entry name" value="Haloacid_Dehalogenase"/>
    <property type="match status" value="1"/>
</dbReference>
<dbReference type="SUPFAM" id="SSF56784">
    <property type="entry name" value="HAD-like"/>
    <property type="match status" value="1"/>
</dbReference>
<comment type="function">
    <text evidence="1">Specifically catalyzes the dephosphorylation of 2-phosphoglycolate. Is involved in the dissimilation of the intracellular 2-phosphoglycolate formed during the DNA repair of 3'-phosphoglycolate ends, a major class of DNA lesions induced by oxidative stress.</text>
</comment>
<comment type="catalytic activity">
    <reaction evidence="1">
        <text>2-phosphoglycolate + H2O = glycolate + phosphate</text>
        <dbReference type="Rhea" id="RHEA:14369"/>
        <dbReference type="ChEBI" id="CHEBI:15377"/>
        <dbReference type="ChEBI" id="CHEBI:29805"/>
        <dbReference type="ChEBI" id="CHEBI:43474"/>
        <dbReference type="ChEBI" id="CHEBI:58033"/>
        <dbReference type="EC" id="3.1.3.18"/>
    </reaction>
</comment>
<comment type="cofactor">
    <cofactor evidence="1">
        <name>Mg(2+)</name>
        <dbReference type="ChEBI" id="CHEBI:18420"/>
    </cofactor>
</comment>
<comment type="pathway">
    <text evidence="1">Organic acid metabolism; glycolate biosynthesis; glycolate from 2-phosphoglycolate: step 1/1.</text>
</comment>
<comment type="similarity">
    <text evidence="1">Belongs to the HAD-like hydrolase superfamily. CbbY/CbbZ/Gph/YieH family.</text>
</comment>
<evidence type="ECO:0000255" key="1">
    <source>
        <dbReference type="HAMAP-Rule" id="MF_00495"/>
    </source>
</evidence>
<reference key="1">
    <citation type="journal article" date="2002" name="Environ. Microbiol.">
        <title>Complete genome sequence and comparative analysis of the metabolically versatile Pseudomonas putida KT2440.</title>
        <authorList>
            <person name="Nelson K.E."/>
            <person name="Weinel C."/>
            <person name="Paulsen I.T."/>
            <person name="Dodson R.J."/>
            <person name="Hilbert H."/>
            <person name="Martins dos Santos V.A.P."/>
            <person name="Fouts D.E."/>
            <person name="Gill S.R."/>
            <person name="Pop M."/>
            <person name="Holmes M."/>
            <person name="Brinkac L.M."/>
            <person name="Beanan M.J."/>
            <person name="DeBoy R.T."/>
            <person name="Daugherty S.C."/>
            <person name="Kolonay J.F."/>
            <person name="Madupu R."/>
            <person name="Nelson W.C."/>
            <person name="White O."/>
            <person name="Peterson J.D."/>
            <person name="Khouri H.M."/>
            <person name="Hance I."/>
            <person name="Chris Lee P."/>
            <person name="Holtzapple E.K."/>
            <person name="Scanlan D."/>
            <person name="Tran K."/>
            <person name="Moazzez A."/>
            <person name="Utterback T.R."/>
            <person name="Rizzo M."/>
            <person name="Lee K."/>
            <person name="Kosack D."/>
            <person name="Moestl D."/>
            <person name="Wedler H."/>
            <person name="Lauber J."/>
            <person name="Stjepandic D."/>
            <person name="Hoheisel J."/>
            <person name="Straetz M."/>
            <person name="Heim S."/>
            <person name="Kiewitz C."/>
            <person name="Eisen J.A."/>
            <person name="Timmis K.N."/>
            <person name="Duesterhoeft A."/>
            <person name="Tuemmler B."/>
            <person name="Fraser C.M."/>
        </authorList>
    </citation>
    <scope>NUCLEOTIDE SEQUENCE [LARGE SCALE GENOMIC DNA]</scope>
    <source>
        <strain>ATCC 47054 / DSM 6125 / CFBP 8728 / NCIMB 11950 / KT2440</strain>
    </source>
</reference>
<proteinExistence type="inferred from homology"/>
<feature type="chain" id="PRO_0000238168" description="Phosphoglycolate phosphatase">
    <location>
        <begin position="1"/>
        <end position="272"/>
    </location>
</feature>
<feature type="active site" description="Nucleophile" evidence="1">
    <location>
        <position position="19"/>
    </location>
</feature>
<feature type="binding site" evidence="1">
    <location>
        <position position="19"/>
    </location>
    <ligand>
        <name>Mg(2+)</name>
        <dbReference type="ChEBI" id="CHEBI:18420"/>
    </ligand>
</feature>
<feature type="binding site" evidence="1">
    <location>
        <position position="21"/>
    </location>
    <ligand>
        <name>Mg(2+)</name>
        <dbReference type="ChEBI" id="CHEBI:18420"/>
    </ligand>
</feature>
<feature type="binding site" evidence="1">
    <location>
        <position position="182"/>
    </location>
    <ligand>
        <name>Mg(2+)</name>
        <dbReference type="ChEBI" id="CHEBI:18420"/>
    </ligand>
</feature>
<name>GPH_PSEPK</name>